<organism>
    <name type="scientific">Homo sapiens</name>
    <name type="common">Human</name>
    <dbReference type="NCBI Taxonomy" id="9606"/>
    <lineage>
        <taxon>Eukaryota</taxon>
        <taxon>Metazoa</taxon>
        <taxon>Chordata</taxon>
        <taxon>Craniata</taxon>
        <taxon>Vertebrata</taxon>
        <taxon>Euteleostomi</taxon>
        <taxon>Mammalia</taxon>
        <taxon>Eutheria</taxon>
        <taxon>Euarchontoglires</taxon>
        <taxon>Primates</taxon>
        <taxon>Haplorrhini</taxon>
        <taxon>Catarrhini</taxon>
        <taxon>Hominidae</taxon>
        <taxon>Homo</taxon>
    </lineage>
</organism>
<protein>
    <recommendedName>
        <fullName>DNA repair and recombination protein RAD54-like</fullName>
        <ecNumber evidence="15">3.6.4.12</ecNumber>
    </recommendedName>
    <alternativeName>
        <fullName>RAD54 homolog</fullName>
        <shortName>hHR54</shortName>
        <shortName>hRAD54</shortName>
    </alternativeName>
</protein>
<dbReference type="EC" id="3.6.4.12" evidence="15"/>
<dbReference type="EMBL" id="X97795">
    <property type="protein sequence ID" value="CAA66379.1"/>
    <property type="molecule type" value="mRNA"/>
</dbReference>
<dbReference type="EMBL" id="AY623117">
    <property type="protein sequence ID" value="AAT38113.1"/>
    <property type="molecule type" value="Genomic_DNA"/>
</dbReference>
<dbReference type="EMBL" id="AL121602">
    <property type="status" value="NOT_ANNOTATED_CDS"/>
    <property type="molecule type" value="Genomic_DNA"/>
</dbReference>
<dbReference type="EMBL" id="BC121059">
    <property type="protein sequence ID" value="AAI21060.1"/>
    <property type="molecule type" value="mRNA"/>
</dbReference>
<dbReference type="EMBL" id="BC121060">
    <property type="protein sequence ID" value="AAI21061.1"/>
    <property type="molecule type" value="mRNA"/>
</dbReference>
<dbReference type="CCDS" id="CCDS532.1"/>
<dbReference type="RefSeq" id="NP_001136020.1">
    <property type="nucleotide sequence ID" value="NM_001142548.2"/>
</dbReference>
<dbReference type="RefSeq" id="NP_003570.2">
    <property type="nucleotide sequence ID" value="NM_003579.4"/>
</dbReference>
<dbReference type="SMR" id="Q92698"/>
<dbReference type="BioGRID" id="114018">
    <property type="interactions" value="18"/>
</dbReference>
<dbReference type="DIP" id="DIP-48628N"/>
<dbReference type="ELM" id="Q92698"/>
<dbReference type="FunCoup" id="Q92698">
    <property type="interactions" value="1350"/>
</dbReference>
<dbReference type="IntAct" id="Q92698">
    <property type="interactions" value="10"/>
</dbReference>
<dbReference type="STRING" id="9606.ENSP00000361043"/>
<dbReference type="BindingDB" id="Q92698"/>
<dbReference type="ChEMBL" id="CHEMBL2146297"/>
<dbReference type="iPTMnet" id="Q92698"/>
<dbReference type="PhosphoSitePlus" id="Q92698"/>
<dbReference type="BioMuta" id="RAD54L"/>
<dbReference type="DMDM" id="51316508"/>
<dbReference type="jPOST" id="Q92698"/>
<dbReference type="MassIVE" id="Q92698"/>
<dbReference type="PaxDb" id="9606-ENSP00000361043"/>
<dbReference type="PeptideAtlas" id="Q92698"/>
<dbReference type="ProteomicsDB" id="75414"/>
<dbReference type="Pumba" id="Q92698"/>
<dbReference type="Antibodypedia" id="18708">
    <property type="antibodies" value="262 antibodies from 31 providers"/>
</dbReference>
<dbReference type="DNASU" id="8438"/>
<dbReference type="Ensembl" id="ENST00000371975.9">
    <property type="protein sequence ID" value="ENSP00000361043.4"/>
    <property type="gene ID" value="ENSG00000085999.13"/>
</dbReference>
<dbReference type="Ensembl" id="ENST00000442598.5">
    <property type="protein sequence ID" value="ENSP00000396113.1"/>
    <property type="gene ID" value="ENSG00000085999.13"/>
</dbReference>
<dbReference type="Ensembl" id="ENST00000671528.1">
    <property type="protein sequence ID" value="ENSP00000499652.1"/>
    <property type="gene ID" value="ENSG00000085999.13"/>
</dbReference>
<dbReference type="GeneID" id="8438"/>
<dbReference type="KEGG" id="hsa:8438"/>
<dbReference type="MANE-Select" id="ENST00000371975.9">
    <property type="protein sequence ID" value="ENSP00000361043.4"/>
    <property type="RefSeq nucleotide sequence ID" value="NM_003579.4"/>
    <property type="RefSeq protein sequence ID" value="NP_003570.2"/>
</dbReference>
<dbReference type="UCSC" id="uc001cpl.3">
    <property type="organism name" value="human"/>
</dbReference>
<dbReference type="AGR" id="HGNC:9826"/>
<dbReference type="CTD" id="8438"/>
<dbReference type="DisGeNET" id="8438"/>
<dbReference type="GeneCards" id="RAD54L"/>
<dbReference type="HGNC" id="HGNC:9826">
    <property type="gene designation" value="RAD54L"/>
</dbReference>
<dbReference type="HPA" id="ENSG00000085999">
    <property type="expression patterns" value="Tissue enhanced (lymphoid tissue, testis)"/>
</dbReference>
<dbReference type="MalaCards" id="RAD54L"/>
<dbReference type="MIM" id="603615">
    <property type="type" value="gene"/>
</dbReference>
<dbReference type="neXtProt" id="NX_Q92698"/>
<dbReference type="OpenTargets" id="ENSG00000085999"/>
<dbReference type="Orphanet" id="227535">
    <property type="disease" value="Hereditary breast cancer"/>
</dbReference>
<dbReference type="PharmGKB" id="PA34181"/>
<dbReference type="VEuPathDB" id="HostDB:ENSG00000085999"/>
<dbReference type="eggNOG" id="KOG0390">
    <property type="taxonomic scope" value="Eukaryota"/>
</dbReference>
<dbReference type="GeneTree" id="ENSGT00940000156897"/>
<dbReference type="HOGENOM" id="CLU_000315_10_5_1"/>
<dbReference type="InParanoid" id="Q92698"/>
<dbReference type="OMA" id="YTEHERM"/>
<dbReference type="OrthoDB" id="413460at2759"/>
<dbReference type="PAN-GO" id="Q92698">
    <property type="GO annotations" value="4 GO annotations based on evolutionary models"/>
</dbReference>
<dbReference type="PhylomeDB" id="Q92698"/>
<dbReference type="TreeFam" id="TF101224"/>
<dbReference type="BRENDA" id="3.6.4.B9">
    <property type="organism ID" value="2681"/>
</dbReference>
<dbReference type="PathwayCommons" id="Q92698"/>
<dbReference type="SignaLink" id="Q92698"/>
<dbReference type="SIGNOR" id="Q92698"/>
<dbReference type="BioGRID-ORCS" id="8438">
    <property type="hits" value="55 hits in 1167 CRISPR screens"/>
</dbReference>
<dbReference type="ChiTaRS" id="RAD54L">
    <property type="organism name" value="human"/>
</dbReference>
<dbReference type="GeneWiki" id="DNA_repair_and_recombination_protein_RAD54-like"/>
<dbReference type="GenomeRNAi" id="8438"/>
<dbReference type="Pharos" id="Q92698">
    <property type="development level" value="Tbio"/>
</dbReference>
<dbReference type="PRO" id="PR:Q92698"/>
<dbReference type="Proteomes" id="UP000005640">
    <property type="component" value="Chromosome 1"/>
</dbReference>
<dbReference type="RNAct" id="Q92698">
    <property type="molecule type" value="protein"/>
</dbReference>
<dbReference type="Bgee" id="ENSG00000085999">
    <property type="expression patterns" value="Expressed in left testis and 102 other cell types or tissues"/>
</dbReference>
<dbReference type="ExpressionAtlas" id="Q92698">
    <property type="expression patterns" value="baseline and differential"/>
</dbReference>
<dbReference type="GO" id="GO:0005654">
    <property type="term" value="C:nucleoplasm"/>
    <property type="evidence" value="ECO:0000314"/>
    <property type="project" value="HPA"/>
</dbReference>
<dbReference type="GO" id="GO:0005634">
    <property type="term" value="C:nucleus"/>
    <property type="evidence" value="ECO:0000318"/>
    <property type="project" value="GO_Central"/>
</dbReference>
<dbReference type="GO" id="GO:0032991">
    <property type="term" value="C:protein-containing complex"/>
    <property type="evidence" value="ECO:0000315"/>
    <property type="project" value="UniProtKB"/>
</dbReference>
<dbReference type="GO" id="GO:0005524">
    <property type="term" value="F:ATP binding"/>
    <property type="evidence" value="ECO:0007669"/>
    <property type="project" value="UniProtKB-KW"/>
</dbReference>
<dbReference type="GO" id="GO:0016887">
    <property type="term" value="F:ATP hydrolysis activity"/>
    <property type="evidence" value="ECO:0007669"/>
    <property type="project" value="RHEA"/>
</dbReference>
<dbReference type="GO" id="GO:0036310">
    <property type="term" value="F:ATP-dependent DNA/DNA annealing activity"/>
    <property type="evidence" value="ECO:0000314"/>
    <property type="project" value="UniProtKB"/>
</dbReference>
<dbReference type="GO" id="GO:0015616">
    <property type="term" value="F:DNA translocase activity"/>
    <property type="evidence" value="ECO:0000318"/>
    <property type="project" value="GO_Central"/>
</dbReference>
<dbReference type="GO" id="GO:0004386">
    <property type="term" value="F:helicase activity"/>
    <property type="evidence" value="ECO:0007669"/>
    <property type="project" value="UniProtKB-KW"/>
</dbReference>
<dbReference type="GO" id="GO:0046872">
    <property type="term" value="F:metal ion binding"/>
    <property type="evidence" value="ECO:0007669"/>
    <property type="project" value="UniProtKB-KW"/>
</dbReference>
<dbReference type="GO" id="GO:0051276">
    <property type="term" value="P:chromosome organization"/>
    <property type="evidence" value="ECO:0007669"/>
    <property type="project" value="Ensembl"/>
</dbReference>
<dbReference type="GO" id="GO:0008340">
    <property type="term" value="P:determination of adult lifespan"/>
    <property type="evidence" value="ECO:0007669"/>
    <property type="project" value="Ensembl"/>
</dbReference>
<dbReference type="GO" id="GO:0006310">
    <property type="term" value="P:DNA recombination"/>
    <property type="evidence" value="ECO:0000304"/>
    <property type="project" value="ProtInc"/>
</dbReference>
<dbReference type="GO" id="GO:0006281">
    <property type="term" value="P:DNA repair"/>
    <property type="evidence" value="ECO:0000304"/>
    <property type="project" value="ProtInc"/>
</dbReference>
<dbReference type="GO" id="GO:0045003">
    <property type="term" value="P:double-strand break repair via synthesis-dependent strand annealing"/>
    <property type="evidence" value="ECO:0000318"/>
    <property type="project" value="GO_Central"/>
</dbReference>
<dbReference type="GO" id="GO:0051321">
    <property type="term" value="P:meiotic cell cycle"/>
    <property type="evidence" value="ECO:0000304"/>
    <property type="project" value="ProtInc"/>
</dbReference>
<dbReference type="GO" id="GO:0007131">
    <property type="term" value="P:reciprocal meiotic recombination"/>
    <property type="evidence" value="ECO:0000318"/>
    <property type="project" value="GO_Central"/>
</dbReference>
<dbReference type="GO" id="GO:0010212">
    <property type="term" value="P:response to ionizing radiation"/>
    <property type="evidence" value="ECO:0007669"/>
    <property type="project" value="Ensembl"/>
</dbReference>
<dbReference type="GO" id="GO:0009410">
    <property type="term" value="P:response to xenobiotic stimulus"/>
    <property type="evidence" value="ECO:0007669"/>
    <property type="project" value="Ensembl"/>
</dbReference>
<dbReference type="CDD" id="cd18067">
    <property type="entry name" value="DEXHc_RAD54A"/>
    <property type="match status" value="1"/>
</dbReference>
<dbReference type="CDD" id="cd18793">
    <property type="entry name" value="SF2_C_SNF"/>
    <property type="match status" value="1"/>
</dbReference>
<dbReference type="FunFam" id="1.20.120.850:FF:000002">
    <property type="entry name" value="DNA repair and recombination protein RAD54-like"/>
    <property type="match status" value="1"/>
</dbReference>
<dbReference type="FunFam" id="3.40.50.10810:FF:000010">
    <property type="entry name" value="DNA repair and recombination protein RAD54-like"/>
    <property type="match status" value="1"/>
</dbReference>
<dbReference type="FunFam" id="3.40.50.300:FF:000332">
    <property type="entry name" value="DNA repair and recombination protein RAD54-like"/>
    <property type="match status" value="1"/>
</dbReference>
<dbReference type="Gene3D" id="3.40.50.300">
    <property type="entry name" value="P-loop containing nucleotide triphosphate hydrolases"/>
    <property type="match status" value="1"/>
</dbReference>
<dbReference type="Gene3D" id="1.20.120.850">
    <property type="entry name" value="SWI2/SNF2 ATPases, N-terminal domain"/>
    <property type="match status" value="1"/>
</dbReference>
<dbReference type="Gene3D" id="3.40.50.10810">
    <property type="entry name" value="Tandem AAA-ATPase domain"/>
    <property type="match status" value="1"/>
</dbReference>
<dbReference type="InterPro" id="IPR014001">
    <property type="entry name" value="Helicase_ATP-bd"/>
</dbReference>
<dbReference type="InterPro" id="IPR001650">
    <property type="entry name" value="Helicase_C-like"/>
</dbReference>
<dbReference type="InterPro" id="IPR027417">
    <property type="entry name" value="P-loop_NTPase"/>
</dbReference>
<dbReference type="InterPro" id="IPR038718">
    <property type="entry name" value="SNF2-like_sf"/>
</dbReference>
<dbReference type="InterPro" id="IPR049730">
    <property type="entry name" value="SNF2/RAD54-like_C"/>
</dbReference>
<dbReference type="InterPro" id="IPR000330">
    <property type="entry name" value="SNF2_N"/>
</dbReference>
<dbReference type="InterPro" id="IPR050496">
    <property type="entry name" value="SNF2_RAD54_helicase_repair"/>
</dbReference>
<dbReference type="PANTHER" id="PTHR45629:SF7">
    <property type="entry name" value="DNA EXCISION REPAIR PROTEIN ERCC-6-RELATED"/>
    <property type="match status" value="1"/>
</dbReference>
<dbReference type="PANTHER" id="PTHR45629">
    <property type="entry name" value="SNF2/RAD54 FAMILY MEMBER"/>
    <property type="match status" value="1"/>
</dbReference>
<dbReference type="Pfam" id="PF00271">
    <property type="entry name" value="Helicase_C"/>
    <property type="match status" value="1"/>
</dbReference>
<dbReference type="Pfam" id="PF00176">
    <property type="entry name" value="SNF2-rel_dom"/>
    <property type="match status" value="1"/>
</dbReference>
<dbReference type="SMART" id="SM00487">
    <property type="entry name" value="DEXDc"/>
    <property type="match status" value="1"/>
</dbReference>
<dbReference type="SMART" id="SM00490">
    <property type="entry name" value="HELICc"/>
    <property type="match status" value="1"/>
</dbReference>
<dbReference type="SUPFAM" id="SSF52540">
    <property type="entry name" value="P-loop containing nucleoside triphosphate hydrolases"/>
    <property type="match status" value="2"/>
</dbReference>
<dbReference type="PROSITE" id="PS51192">
    <property type="entry name" value="HELICASE_ATP_BIND_1"/>
    <property type="match status" value="1"/>
</dbReference>
<dbReference type="PROSITE" id="PS51194">
    <property type="entry name" value="HELICASE_CTER"/>
    <property type="match status" value="1"/>
</dbReference>
<feature type="chain" id="PRO_0000074337" description="DNA repair and recombination protein RAD54-like">
    <location>
        <begin position="1"/>
        <end position="747"/>
    </location>
</feature>
<feature type="domain" description="Helicase ATP-binding" evidence="4">
    <location>
        <begin position="170"/>
        <end position="345"/>
    </location>
</feature>
<feature type="domain" description="Helicase C-terminal" evidence="5">
    <location>
        <begin position="500"/>
        <end position="653"/>
    </location>
</feature>
<feature type="region of interest" description="Disordered" evidence="6">
    <location>
        <begin position="1"/>
        <end position="41"/>
    </location>
</feature>
<feature type="region of interest" description="Required for chromatin remodeling, strand pairing activities and coupling of ATPase activity" evidence="1">
    <location>
        <begin position="2"/>
        <end position="9"/>
    </location>
</feature>
<feature type="short sequence motif" description="DEGH box">
    <location>
        <begin position="296"/>
        <end position="299"/>
    </location>
</feature>
<feature type="binding site" evidence="4">
    <location>
        <begin position="183"/>
        <end position="190"/>
    </location>
    <ligand>
        <name>ATP</name>
        <dbReference type="ChEBI" id="CHEBI:30616"/>
    </ligand>
</feature>
<feature type="modified residue" description="Phosphoserine" evidence="18">
    <location>
        <position position="38"/>
    </location>
</feature>
<feature type="modified residue" description="N6-acetyllysine" evidence="12">
    <location>
        <position position="515"/>
    </location>
</feature>
<feature type="modified residue" description="Phosphoserine; by NEK1" evidence="11">
    <location>
        <position position="572"/>
    </location>
</feature>
<feature type="sequence variant" id="VAR_055363" description="In dbSNP:rs28363192." evidence="16">
    <original>D</original>
    <variation>G</variation>
    <location>
        <position position="21"/>
    </location>
</feature>
<feature type="sequence variant" id="VAR_019559" description="In a colon adenocarcinoma sample; dbSNP:rs121908688." evidence="7">
    <original>P</original>
    <variation>H</variation>
    <location>
        <position position="63"/>
    </location>
</feature>
<feature type="sequence variant" id="VAR_055364" description="In dbSNP:rs28363209." evidence="16">
    <original>I</original>
    <variation>M</variation>
    <location>
        <position position="74"/>
    </location>
</feature>
<feature type="sequence variant" id="VAR_019560" description="In dbSNP:rs2295466." evidence="7">
    <original>K</original>
    <variation>E</variation>
    <location>
        <position position="151"/>
    </location>
</feature>
<feature type="sequence variant" id="VAR_055365" description="In dbSNP:rs28363218." evidence="16">
    <original>R</original>
    <variation>C</variation>
    <location>
        <position position="202"/>
    </location>
</feature>
<feature type="sequence variant" id="VAR_019561" description="In a breast cancer sample; invasive ductal; dbSNP:rs121908690." evidence="7">
    <original>G</original>
    <variation>R</variation>
    <location>
        <position position="325"/>
    </location>
</feature>
<feature type="sequence variant" id="VAR_055366" description="In dbSNP:rs28363234." evidence="16">
    <original>R</original>
    <variation>Q</variation>
    <location>
        <position position="380"/>
    </location>
</feature>
<feature type="sequence variant" id="VAR_019562" description="In a non-Hodgkin lymphoma sample; dbSNP:rs121908689." evidence="7">
    <original>V</original>
    <variation>E</variation>
    <location>
        <position position="444"/>
    </location>
</feature>
<feature type="sequence variant" id="VAR_055367" description="In dbSNP:rs28363240." evidence="16">
    <original>R</original>
    <variation>C</variation>
    <location>
        <position position="534"/>
    </location>
</feature>
<feature type="sequence variant" id="VAR_055368" description="In dbSNP:rs28363243." evidence="16">
    <original>I</original>
    <variation>T</variation>
    <location>
        <position position="583"/>
    </location>
</feature>
<feature type="mutagenesis site" description="Unable to rescue the MMS-sensitive phenotype of S cerevisiae rad54delta cells." evidence="13">
    <original>K</original>
    <variation>R</variation>
    <location>
        <position position="189"/>
    </location>
</feature>
<feature type="mutagenesis site" description="Loss of acetylation." evidence="12">
    <original>K</original>
    <variation>R</variation>
    <location>
        <position position="515"/>
    </location>
</feature>
<feature type="mutagenesis site" description="Defect in homologous recombination (HR)." evidence="11">
    <original>S</original>
    <variation>A</variation>
    <location>
        <position position="572"/>
    </location>
</feature>
<feature type="mutagenesis site" description="Promotes homologous recombination (HR), but causes RAD51 removal from chromatin." evidence="11">
    <original>S</original>
    <variation>E</variation>
    <location>
        <position position="572"/>
    </location>
</feature>
<feature type="sequence conflict" description="In Ref. 1; CAA66379." evidence="17" ref="1">
    <original>R</original>
    <variation>H</variation>
    <location>
        <position position="738"/>
    </location>
</feature>
<name>RAD54_HUMAN</name>
<keyword id="KW-0007">Acetylation</keyword>
<keyword id="KW-0067">ATP-binding</keyword>
<keyword id="KW-0227">DNA damage</keyword>
<keyword id="KW-0234">DNA repair</keyword>
<keyword id="KW-0238">DNA-binding</keyword>
<keyword id="KW-0347">Helicase</keyword>
<keyword id="KW-0378">Hydrolase</keyword>
<keyword id="KW-0479">Metal-binding</keyword>
<keyword id="KW-0547">Nucleotide-binding</keyword>
<keyword id="KW-0539">Nucleus</keyword>
<keyword id="KW-0597">Phosphoprotein</keyword>
<keyword id="KW-1267">Proteomics identification</keyword>
<keyword id="KW-1185">Reference proteome</keyword>
<keyword id="KW-0862">Zinc</keyword>
<proteinExistence type="evidence at protein level"/>
<accession>Q92698</accession>
<accession>Q5TE31</accession>
<accession>Q6IUY3</accession>
<evidence type="ECO:0000250" key="1"/>
<evidence type="ECO:0000250" key="2">
    <source>
        <dbReference type="UniProtKB" id="P32863"/>
    </source>
</evidence>
<evidence type="ECO:0000250" key="3">
    <source>
        <dbReference type="UniProtKB" id="Q7ZV09"/>
    </source>
</evidence>
<evidence type="ECO:0000255" key="4">
    <source>
        <dbReference type="PROSITE-ProRule" id="PRU00541"/>
    </source>
</evidence>
<evidence type="ECO:0000255" key="5">
    <source>
        <dbReference type="PROSITE-ProRule" id="PRU00542"/>
    </source>
</evidence>
<evidence type="ECO:0000256" key="6">
    <source>
        <dbReference type="SAM" id="MobiDB-lite"/>
    </source>
</evidence>
<evidence type="ECO:0000269" key="7">
    <source>
    </source>
</evidence>
<evidence type="ECO:0000269" key="8">
    <source>
    </source>
</evidence>
<evidence type="ECO:0000269" key="9">
    <source>
    </source>
</evidence>
<evidence type="ECO:0000269" key="10">
    <source>
    </source>
</evidence>
<evidence type="ECO:0000269" key="11">
    <source>
    </source>
</evidence>
<evidence type="ECO:0000269" key="12">
    <source>
    </source>
</evidence>
<evidence type="ECO:0000269" key="13">
    <source>
    </source>
</evidence>
<evidence type="ECO:0000269" key="14">
    <source>
    </source>
</evidence>
<evidence type="ECO:0000269" key="15">
    <source>
    </source>
</evidence>
<evidence type="ECO:0000269" key="16">
    <source ref="2"/>
</evidence>
<evidence type="ECO:0000305" key="17"/>
<evidence type="ECO:0007744" key="18">
    <source>
    </source>
</evidence>
<gene>
    <name type="primary">RAD54L</name>
    <name type="synonym">RAD54A</name>
</gene>
<comment type="function">
    <text evidence="2 8 9 10 11 12 15">Plays an essential role in homologous recombination (HR) which is a major pathway for repairing DNA double-strand breaks (DSBs), single-stranded DNA (ssDNA) gaps, and stalled or collapsed replication forks (PubMed:11459989, PubMed:12205100, PubMed:24798879, PubMed:27264870, PubMed:32457312, PubMed:9774452). Acts as a molecular motor during the homology search and guides RAD51 ssDNA along a donor dsDNA thereby changing the homology search from the diffusion-based mechanism to a motor-guided mechanism. Also plays an essential role in RAD51-mediated synaptic complex formation which consists of three strands encased in a protein filament formed once homology is recognized. Once DNA strand exchange occured, dissociates RAD51 from nucleoprotein filaments formed on dsDNA (By similarity).</text>
</comment>
<comment type="catalytic activity">
    <reaction evidence="15">
        <text>ATP + H2O = ADP + phosphate + H(+)</text>
        <dbReference type="Rhea" id="RHEA:13065"/>
        <dbReference type="ChEBI" id="CHEBI:15377"/>
        <dbReference type="ChEBI" id="CHEBI:15378"/>
        <dbReference type="ChEBI" id="CHEBI:30616"/>
        <dbReference type="ChEBI" id="CHEBI:43474"/>
        <dbReference type="ChEBI" id="CHEBI:456216"/>
        <dbReference type="EC" id="3.6.4.12"/>
    </reaction>
</comment>
<comment type="subunit">
    <text evidence="3 10 12 14">Homohexamer (By similarity). Interacts (via N-terminus) with RAD51 (PubMed:9321665). Interacts with NAP1L1 (PubMed:24798879). Interacts with BRD9; this interaction orchestrates RAD51-RAD54 complex formation (PubMed:32457312).</text>
</comment>
<comment type="interaction">
    <interactant intactId="EBI-5333483">
        <id>Q92698</id>
    </interactant>
    <interactant intactId="EBI-741158">
        <id>Q96HA8</id>
        <label>NTAQ1</label>
    </interactant>
    <organismsDiffer>false</organismsDiffer>
    <experiments>6</experiments>
</comment>
<comment type="interaction">
    <interactant intactId="EBI-5333483">
        <id>Q92698</id>
    </interactant>
    <interactant intactId="EBI-4398527">
        <id>Q9H2K2</id>
        <label>TNKS2</label>
    </interactant>
    <organismsDiffer>false</organismsDiffer>
    <experiments>3</experiments>
</comment>
<comment type="subcellular location">
    <subcellularLocation>
        <location evidence="13">Nucleus</location>
    </subcellularLocation>
</comment>
<comment type="induction">
    <text>Expression increases approximately 3-fold in late G1 phase compared to other phases of the cell cycle.</text>
</comment>
<comment type="PTM">
    <text evidence="12">Acetylated. Acetylation promotes interaction with BRD9, and subsequently with RAD54, which is essential for homologous recombination (HR).</text>
</comment>
<comment type="PTM">
    <text evidence="11">Phosphorylated. Phosphorylation at Ser-572 by NEK1 specifically in G2 phase allows efficient removal of RAD51 filaments from DNA.</text>
</comment>
<comment type="similarity">
    <text evidence="17">Belongs to the SNF2/RAD54 helicase family.</text>
</comment>
<sequence length="747" mass="84352">MRRSLAPSQLAKRKPEGRSCDDEDWQPGLVTPRKRKSSSETQIQECFLSPFRKPLSQLTNQPPCLDSSQHEAFIRSILSKPFKVPIPNYQGPLGSRALGLKRAGVRRALHDPLEKDALVLYEPPPLSAHDQLKLDKEKLPVHVVVDPILSKVLRPHQREGVKFLWECVTSRRIPGSHGCIMADEMGLGKTLQCITLMWTLLRQSPECKPEIDKAVVVSPSSLVKNWYNEVGKWLGGRIQPLAIDGGSKDEIDQKLEGFMNQRGARVSSPILIISYETFRLHVGVLQKGSVGLVICDEGHRLKNSENQTYQALDSLNTSRRVLISGTPIQNDLLEYFSLVHFVNSGILGTAHEFKKHFELPILKGRDAAASEADRQLGEERLRELTSIVNRCLIRRTSDILSKYLPVKIEQVVCCRLTPLQTELYKRFLRQAKPAEELLEGKMSVSSLSSITSLKKLCNHPALIYDKCVEEEDGFVGALDLFPPGYSSKALEPQLSGKMLVLDYILAVTRSRSSDKVVLVSNYTQTLDLFEKLCRARRYLYVRLDGTMSIKKRAKVVERFNSPSSPDFVFMLSSKAGGCGLNLIGANRLVMFDPDWNPANDEQAMARVWRDGQKKTCYIYRLLSAGTIEEKIFQRQSHKKALSSCVVDEEQDVERHFSLGELKELFILDEASLSDTHDRLHCRRCVNSRQIRPPPDGSDCTSDLAGWNHCTDKWGLRDEVLQAAWDAASTAITFVFHQRSHEEQRGLR</sequence>
<reference key="1">
    <citation type="journal article" date="1996" name="Curr. Biol.">
        <title>Human and mouse homologs of the Saccharomyces cerevisiae RAD54 DNA repair gene: evidence for functional conservation.</title>
        <authorList>
            <person name="Kanaar R."/>
            <person name="Troelstra C."/>
            <person name="Swagemakers S.M.A."/>
            <person name="Essers J."/>
            <person name="Smit B."/>
            <person name="Franssen J.-H."/>
            <person name="Pastink A."/>
            <person name="Bezzubova O.Y."/>
            <person name="Buerstedde J.-M."/>
            <person name="Clever B."/>
            <person name="Heyer W.-D."/>
            <person name="Hoeijmakers J.H.J."/>
        </authorList>
    </citation>
    <scope>NUCLEOTIDE SEQUENCE [MRNA]</scope>
    <scope>SUBCELLULAR LOCATION</scope>
    <scope>CELL CYCLE REGULATION</scope>
    <scope>MUTAGENESIS OF LYS-189</scope>
    <source>
        <tissue>Testis</tissue>
    </source>
</reference>
<reference key="2">
    <citation type="submission" date="2004-05" db="EMBL/GenBank/DDBJ databases">
        <authorList>
            <consortium name="NIEHS SNPs program"/>
        </authorList>
    </citation>
    <scope>NUCLEOTIDE SEQUENCE [GENOMIC DNA]</scope>
    <scope>VARIANTS GLY-21; MET-74; CYS-202; GLN-380; CYS-534 AND THR-583</scope>
</reference>
<reference key="3">
    <citation type="journal article" date="2006" name="Nature">
        <title>The DNA sequence and biological annotation of human chromosome 1.</title>
        <authorList>
            <person name="Gregory S.G."/>
            <person name="Barlow K.F."/>
            <person name="McLay K.E."/>
            <person name="Kaul R."/>
            <person name="Swarbreck D."/>
            <person name="Dunham A."/>
            <person name="Scott C.E."/>
            <person name="Howe K.L."/>
            <person name="Woodfine K."/>
            <person name="Spencer C.C.A."/>
            <person name="Jones M.C."/>
            <person name="Gillson C."/>
            <person name="Searle S."/>
            <person name="Zhou Y."/>
            <person name="Kokocinski F."/>
            <person name="McDonald L."/>
            <person name="Evans R."/>
            <person name="Phillips K."/>
            <person name="Atkinson A."/>
            <person name="Cooper R."/>
            <person name="Jones C."/>
            <person name="Hall R.E."/>
            <person name="Andrews T.D."/>
            <person name="Lloyd C."/>
            <person name="Ainscough R."/>
            <person name="Almeida J.P."/>
            <person name="Ambrose K.D."/>
            <person name="Anderson F."/>
            <person name="Andrew R.W."/>
            <person name="Ashwell R.I.S."/>
            <person name="Aubin K."/>
            <person name="Babbage A.K."/>
            <person name="Bagguley C.L."/>
            <person name="Bailey J."/>
            <person name="Beasley H."/>
            <person name="Bethel G."/>
            <person name="Bird C.P."/>
            <person name="Bray-Allen S."/>
            <person name="Brown J.Y."/>
            <person name="Brown A.J."/>
            <person name="Buckley D."/>
            <person name="Burton J."/>
            <person name="Bye J."/>
            <person name="Carder C."/>
            <person name="Chapman J.C."/>
            <person name="Clark S.Y."/>
            <person name="Clarke G."/>
            <person name="Clee C."/>
            <person name="Cobley V."/>
            <person name="Collier R.E."/>
            <person name="Corby N."/>
            <person name="Coville G.J."/>
            <person name="Davies J."/>
            <person name="Deadman R."/>
            <person name="Dunn M."/>
            <person name="Earthrowl M."/>
            <person name="Ellington A.G."/>
            <person name="Errington H."/>
            <person name="Frankish A."/>
            <person name="Frankland J."/>
            <person name="French L."/>
            <person name="Garner P."/>
            <person name="Garnett J."/>
            <person name="Gay L."/>
            <person name="Ghori M.R.J."/>
            <person name="Gibson R."/>
            <person name="Gilby L.M."/>
            <person name="Gillett W."/>
            <person name="Glithero R.J."/>
            <person name="Grafham D.V."/>
            <person name="Griffiths C."/>
            <person name="Griffiths-Jones S."/>
            <person name="Grocock R."/>
            <person name="Hammond S."/>
            <person name="Harrison E.S.I."/>
            <person name="Hart E."/>
            <person name="Haugen E."/>
            <person name="Heath P.D."/>
            <person name="Holmes S."/>
            <person name="Holt K."/>
            <person name="Howden P.J."/>
            <person name="Hunt A.R."/>
            <person name="Hunt S.E."/>
            <person name="Hunter G."/>
            <person name="Isherwood J."/>
            <person name="James R."/>
            <person name="Johnson C."/>
            <person name="Johnson D."/>
            <person name="Joy A."/>
            <person name="Kay M."/>
            <person name="Kershaw J.K."/>
            <person name="Kibukawa M."/>
            <person name="Kimberley A.M."/>
            <person name="King A."/>
            <person name="Knights A.J."/>
            <person name="Lad H."/>
            <person name="Laird G."/>
            <person name="Lawlor S."/>
            <person name="Leongamornlert D.A."/>
            <person name="Lloyd D.M."/>
            <person name="Loveland J."/>
            <person name="Lovell J."/>
            <person name="Lush M.J."/>
            <person name="Lyne R."/>
            <person name="Martin S."/>
            <person name="Mashreghi-Mohammadi M."/>
            <person name="Matthews L."/>
            <person name="Matthews N.S.W."/>
            <person name="McLaren S."/>
            <person name="Milne S."/>
            <person name="Mistry S."/>
            <person name="Moore M.J.F."/>
            <person name="Nickerson T."/>
            <person name="O'Dell C.N."/>
            <person name="Oliver K."/>
            <person name="Palmeiri A."/>
            <person name="Palmer S.A."/>
            <person name="Parker A."/>
            <person name="Patel D."/>
            <person name="Pearce A.V."/>
            <person name="Peck A.I."/>
            <person name="Pelan S."/>
            <person name="Phelps K."/>
            <person name="Phillimore B.J."/>
            <person name="Plumb R."/>
            <person name="Rajan J."/>
            <person name="Raymond C."/>
            <person name="Rouse G."/>
            <person name="Saenphimmachak C."/>
            <person name="Sehra H.K."/>
            <person name="Sheridan E."/>
            <person name="Shownkeen R."/>
            <person name="Sims S."/>
            <person name="Skuce C.D."/>
            <person name="Smith M."/>
            <person name="Steward C."/>
            <person name="Subramanian S."/>
            <person name="Sycamore N."/>
            <person name="Tracey A."/>
            <person name="Tromans A."/>
            <person name="Van Helmond Z."/>
            <person name="Wall M."/>
            <person name="Wallis J.M."/>
            <person name="White S."/>
            <person name="Whitehead S.L."/>
            <person name="Wilkinson J.E."/>
            <person name="Willey D.L."/>
            <person name="Williams H."/>
            <person name="Wilming L."/>
            <person name="Wray P.W."/>
            <person name="Wu Z."/>
            <person name="Coulson A."/>
            <person name="Vaudin M."/>
            <person name="Sulston J.E."/>
            <person name="Durbin R.M."/>
            <person name="Hubbard T."/>
            <person name="Wooster R."/>
            <person name="Dunham I."/>
            <person name="Carter N.P."/>
            <person name="McVean G."/>
            <person name="Ross M.T."/>
            <person name="Harrow J."/>
            <person name="Olson M.V."/>
            <person name="Beck S."/>
            <person name="Rogers J."/>
            <person name="Bentley D.R."/>
        </authorList>
    </citation>
    <scope>NUCLEOTIDE SEQUENCE [LARGE SCALE GENOMIC DNA]</scope>
</reference>
<reference key="4">
    <citation type="journal article" date="2004" name="Genome Res.">
        <title>The status, quality, and expansion of the NIH full-length cDNA project: the Mammalian Gene Collection (MGC).</title>
        <authorList>
            <consortium name="The MGC Project Team"/>
        </authorList>
    </citation>
    <scope>NUCLEOTIDE SEQUENCE [LARGE SCALE MRNA]</scope>
</reference>
<reference key="5">
    <citation type="journal article" date="1997" name="Cancer Res.">
        <title>Characterization of the human homologue of RAD54: a gene located on chromosome 1p32 at a region of high loss of heterozygosity in breast tumors.</title>
        <authorList>
            <person name="Rasio D."/>
            <person name="Murakumo Y."/>
            <person name="Robbins D."/>
            <person name="Roth T."/>
            <person name="Silver A."/>
            <person name="Negrini M."/>
            <person name="Schmidt C."/>
            <person name="Burczak J."/>
            <person name="Fishel R."/>
            <person name="Croce C.M."/>
        </authorList>
    </citation>
    <scope>CHARACTERIZATION</scope>
</reference>
<reference key="6">
    <citation type="journal article" date="1997" name="Nucleic Acids Res.">
        <title>Interaction of human recombination proteins Rad51 and Rad54.</title>
        <authorList>
            <person name="Golub E.I."/>
            <person name="Kovalenko O.V."/>
            <person name="Gupta R.C."/>
            <person name="Ward D.C."/>
            <person name="Radding C.M."/>
        </authorList>
    </citation>
    <scope>INTERACTION WITH RAD51</scope>
</reference>
<reference key="7">
    <citation type="journal article" date="1998" name="J. Biol. Chem.">
        <title>The human RAD54 recombinational DNA repair protein is a double-stranded DNA-dependent ATPase.</title>
        <authorList>
            <person name="Swagemakers S.M.A."/>
            <person name="Essers J."/>
            <person name="de Wit J."/>
            <person name="Hoeijmakers J.H.J."/>
            <person name="Kanaar R."/>
        </authorList>
    </citation>
    <scope>FUNCTION</scope>
    <scope>CATALYTIC ACTIVITY</scope>
</reference>
<reference key="8">
    <citation type="journal article" date="1999" name="Int. J. Cancer">
        <title>Analysis of the RAD54 gene on chromosome 1p as a potential tumor-suppressor gene in parathyroid adenomas.</title>
        <authorList>
            <person name="Carling T."/>
            <person name="Imanishi Y."/>
            <person name="Gaz R.D."/>
            <person name="Arnold A."/>
        </authorList>
    </citation>
    <scope>LACK OF INVOLVEMENT IN PARATHYROID ADENOMAS</scope>
</reference>
<reference key="9">
    <citation type="journal article" date="2001" name="Proc. Natl. Acad. Sci. U.S.A.">
        <title>The architecture of the human Rad54-DNA complex provides evidence for protein translocation along DNA.</title>
        <authorList>
            <person name="Ristic D."/>
            <person name="Wyman C."/>
            <person name="Paulusma C."/>
            <person name="Kanaar R."/>
        </authorList>
    </citation>
    <scope>FUNCTION</scope>
</reference>
<reference key="10">
    <citation type="journal article" date="2002" name="J. Biol. Chem.">
        <title>Homologous DNA pairing by human recombination factors Rad51 and Rad54.</title>
        <authorList>
            <person name="Sigurdsson S."/>
            <person name="Van Komen S."/>
            <person name="Petukhova G."/>
            <person name="Sung P."/>
        </authorList>
    </citation>
    <scope>FUNCTION</scope>
</reference>
<reference key="11">
    <citation type="journal article" date="2013" name="J. Proteome Res.">
        <title>Toward a comprehensive characterization of a human cancer cell phosphoproteome.</title>
        <authorList>
            <person name="Zhou H."/>
            <person name="Di Palma S."/>
            <person name="Preisinger C."/>
            <person name="Peng M."/>
            <person name="Polat A.N."/>
            <person name="Heck A.J."/>
            <person name="Mohammed S."/>
        </authorList>
    </citation>
    <scope>PHOSPHORYLATION [LARGE SCALE ANALYSIS] AT SER-38</scope>
    <scope>IDENTIFICATION BY MASS SPECTROMETRY [LARGE SCALE ANALYSIS]</scope>
    <source>
        <tissue>Erythroleukemia</tissue>
    </source>
</reference>
<reference key="12">
    <citation type="journal article" date="2014" name="Sci. Rep.">
        <title>Nap1 stimulates homologous recombination by RAD51 and RAD54 in higher-ordered chromatin containing histone H1.</title>
        <authorList>
            <person name="Machida S."/>
            <person name="Takaku M."/>
            <person name="Ikura M."/>
            <person name="Sun J."/>
            <person name="Suzuki H."/>
            <person name="Kobayashi W."/>
            <person name="Kinomura A."/>
            <person name="Osakabe A."/>
            <person name="Tachiwana H."/>
            <person name="Horikoshi Y."/>
            <person name="Fukuto A."/>
            <person name="Matsuda R."/>
            <person name="Ura K."/>
            <person name="Tashiro S."/>
            <person name="Ikura T."/>
            <person name="Kurumizaka H."/>
        </authorList>
    </citation>
    <scope>FUNCTION</scope>
    <scope>INTERACTION WITH NAP1L1</scope>
</reference>
<reference key="13">
    <citation type="journal article" date="2016" name="Mol. Cell">
        <title>Nek1 Regulates Rad54 to Orchestrate Homologous Recombination and Replication Fork Stability.</title>
        <authorList>
            <person name="Spies J."/>
            <person name="Waizenegger A."/>
            <person name="Barton O."/>
            <person name="Suerder M."/>
            <person name="Wright W.D."/>
            <person name="Heyer W.D."/>
            <person name="Loebrich M."/>
        </authorList>
    </citation>
    <scope>PHOSPHORYLATION AT SER-572</scope>
    <scope>MUTAGENESIS OF SER-572</scope>
    <scope>FUNCTION</scope>
</reference>
<reference key="14">
    <citation type="journal article" date="2020" name="Nat. Commun.">
        <title>The bromodomain containing protein BRD-9 orchestrates RAD51-RAD54 complex formation and regulates homologous recombination-mediated repair.</title>
        <authorList>
            <person name="Zhou Q."/>
            <person name="Huang J."/>
            <person name="Zhang C."/>
            <person name="Zhao F."/>
            <person name="Kim W."/>
            <person name="Tu X."/>
            <person name="Zhang Y."/>
            <person name="Nowsheen S."/>
            <person name="Zhu Q."/>
            <person name="Deng M."/>
            <person name="Chen Y."/>
            <person name="Qin B."/>
            <person name="Luo K."/>
            <person name="Liu B."/>
            <person name="Lou Z."/>
            <person name="Mutter R.W."/>
            <person name="Yuan J."/>
        </authorList>
    </citation>
    <scope>ACETYLATION AT LYS-515</scope>
    <scope>INTERACTION WITH BRD9</scope>
    <scope>FUNCTION</scope>
    <scope>MUTAGENESIS OF LYS-515</scope>
</reference>
<reference key="15">
    <citation type="journal article" date="1999" name="Oncogene">
        <title>Mutations in the RAD54 recombination gene in primary cancers.</title>
        <authorList>
            <person name="Matsuda M."/>
            <person name="Miyagawa K."/>
            <person name="Takahashi M."/>
            <person name="Fukuda T."/>
            <person name="Kataoka T."/>
            <person name="Asahara T."/>
            <person name="Inui H."/>
            <person name="Watatani M."/>
            <person name="Yasutomi M."/>
            <person name="Kamada N."/>
            <person name="Dohi K."/>
            <person name="Kamiya K."/>
        </authorList>
    </citation>
    <scope>VARIANTS HIS-63; GLU-151; ARG-325 AND GLU-444</scope>
</reference>